<gene>
    <name type="primary">lec-7</name>
    <name type="ORF">R07B1.2</name>
</gene>
<reference key="1">
    <citation type="journal article" date="1998" name="Science">
        <title>Genome sequence of the nematode C. elegans: a platform for investigating biology.</title>
        <authorList>
            <consortium name="The C. elegans sequencing consortium"/>
        </authorList>
    </citation>
    <scope>NUCLEOTIDE SEQUENCE [LARGE SCALE GENOMIC DNA]</scope>
    <source>
        <strain>Bristol N2</strain>
    </source>
</reference>
<feature type="chain" id="PRO_0000076965" description="Probable galaptin lec-7">
    <location>
        <begin position="1"/>
        <end position="179"/>
    </location>
</feature>
<feature type="domain" description="Galectin" evidence="1">
    <location>
        <begin position="11"/>
        <end position="138"/>
    </location>
</feature>
<evidence type="ECO:0000255" key="1">
    <source>
        <dbReference type="PROSITE-ProRule" id="PRU00639"/>
    </source>
</evidence>
<protein>
    <recommendedName>
        <fullName>Probable galaptin lec-7</fullName>
    </recommendedName>
</protein>
<organism>
    <name type="scientific">Caenorhabditis elegans</name>
    <dbReference type="NCBI Taxonomy" id="6239"/>
    <lineage>
        <taxon>Eukaryota</taxon>
        <taxon>Metazoa</taxon>
        <taxon>Ecdysozoa</taxon>
        <taxon>Nematoda</taxon>
        <taxon>Chromadorea</taxon>
        <taxon>Rhabditida</taxon>
        <taxon>Rhabditina</taxon>
        <taxon>Rhabditomorpha</taxon>
        <taxon>Rhabditoidea</taxon>
        <taxon>Rhabditidae</taxon>
        <taxon>Peloderinae</taxon>
        <taxon>Caenorhabditis</taxon>
    </lineage>
</organism>
<keyword id="KW-0430">Lectin</keyword>
<keyword id="KW-1185">Reference proteome</keyword>
<accession>Q09605</accession>
<proteinExistence type="predicted"/>
<name>LEC7_CAEEL</name>
<dbReference type="EMBL" id="Z48621">
    <property type="protein sequence ID" value="CAA88540.2"/>
    <property type="molecule type" value="Genomic_DNA"/>
</dbReference>
<dbReference type="PIR" id="T23993">
    <property type="entry name" value="T23993"/>
</dbReference>
<dbReference type="RefSeq" id="NP_001379074.1">
    <property type="nucleotide sequence ID" value="NM_001392828.1"/>
</dbReference>
<dbReference type="RefSeq" id="NP_509650.3">
    <property type="nucleotide sequence ID" value="NM_077249.4"/>
</dbReference>
<dbReference type="SMR" id="Q09605"/>
<dbReference type="FunCoup" id="Q09605">
    <property type="interactions" value="11"/>
</dbReference>
<dbReference type="STRING" id="6239.R07B1.2.1"/>
<dbReference type="PaxDb" id="6239-R07B1.2.1"/>
<dbReference type="PeptideAtlas" id="Q09605"/>
<dbReference type="EnsemblMetazoa" id="R07B1.2.1">
    <property type="protein sequence ID" value="R07B1.2.1"/>
    <property type="gene ID" value="WBGene00002270"/>
</dbReference>
<dbReference type="GeneID" id="181199"/>
<dbReference type="UCSC" id="R07B1.2.1">
    <property type="organism name" value="c. elegans"/>
</dbReference>
<dbReference type="AGR" id="WB:WBGene00002270"/>
<dbReference type="WormBase" id="R07B1.2">
    <property type="protein sequence ID" value="CE26722"/>
    <property type="gene ID" value="WBGene00002270"/>
    <property type="gene designation" value="lec-7"/>
</dbReference>
<dbReference type="eggNOG" id="KOG3587">
    <property type="taxonomic scope" value="Eukaryota"/>
</dbReference>
<dbReference type="GeneTree" id="ENSGT00750000118601"/>
<dbReference type="HOGENOM" id="CLU_037794_3_1_1"/>
<dbReference type="InParanoid" id="Q09605"/>
<dbReference type="OMA" id="HEGYYNI"/>
<dbReference type="OrthoDB" id="6251307at2759"/>
<dbReference type="PhylomeDB" id="Q09605"/>
<dbReference type="Reactome" id="R-CEL-6798695">
    <property type="pathway name" value="Neutrophil degranulation"/>
</dbReference>
<dbReference type="PRO" id="PR:Q09605"/>
<dbReference type="Proteomes" id="UP000001940">
    <property type="component" value="Chromosome X"/>
</dbReference>
<dbReference type="Bgee" id="WBGene00002270">
    <property type="expression patterns" value="Expressed in larva and 2 other cell types or tissues"/>
</dbReference>
<dbReference type="GO" id="GO:0030246">
    <property type="term" value="F:carbohydrate binding"/>
    <property type="evidence" value="ECO:0000318"/>
    <property type="project" value="GO_Central"/>
</dbReference>
<dbReference type="GO" id="GO:0016936">
    <property type="term" value="F:galactoside binding"/>
    <property type="evidence" value="ECO:0000318"/>
    <property type="project" value="GO_Central"/>
</dbReference>
<dbReference type="CDD" id="cd00070">
    <property type="entry name" value="GLECT"/>
    <property type="match status" value="1"/>
</dbReference>
<dbReference type="FunFam" id="2.60.120.200:FF:000213">
    <property type="entry name" value="Galectin"/>
    <property type="match status" value="1"/>
</dbReference>
<dbReference type="Gene3D" id="2.60.120.200">
    <property type="match status" value="1"/>
</dbReference>
<dbReference type="InterPro" id="IPR013320">
    <property type="entry name" value="ConA-like_dom_sf"/>
</dbReference>
<dbReference type="InterPro" id="IPR044156">
    <property type="entry name" value="Galectin-like"/>
</dbReference>
<dbReference type="InterPro" id="IPR001079">
    <property type="entry name" value="Galectin_CRD"/>
</dbReference>
<dbReference type="PANTHER" id="PTHR11346:SF49">
    <property type="entry name" value="GALAPTIN LEC-7-RELATED"/>
    <property type="match status" value="1"/>
</dbReference>
<dbReference type="PANTHER" id="PTHR11346">
    <property type="entry name" value="GALECTIN"/>
    <property type="match status" value="1"/>
</dbReference>
<dbReference type="Pfam" id="PF00337">
    <property type="entry name" value="Gal-bind_lectin"/>
    <property type="match status" value="1"/>
</dbReference>
<dbReference type="SMART" id="SM00908">
    <property type="entry name" value="Gal-bind_lectin"/>
    <property type="match status" value="1"/>
</dbReference>
<dbReference type="SMART" id="SM00276">
    <property type="entry name" value="GLECT"/>
    <property type="match status" value="1"/>
</dbReference>
<dbReference type="SUPFAM" id="SSF49899">
    <property type="entry name" value="Concanavalin A-like lectins/glucanases"/>
    <property type="match status" value="1"/>
</dbReference>
<dbReference type="PROSITE" id="PS51304">
    <property type="entry name" value="GALECTIN"/>
    <property type="match status" value="1"/>
</dbReference>
<sequence>MYVIENPKVPSVYQIEENLKAGVEIEVNGAVLHGNDRDFAIELLSGTNIVLHVKFEFNGEHSIVLNSLINGEWGPQLRHSHFLKRHDPFHVRIYVHEGYYNITVNSDLLVEFDHRFPVVAVQGIGIKGSVDIESIVFKGYEFKTEWKKRHAIVNEAVCEAYDTVTNAPSVVQIEGTQHY</sequence>